<gene>
    <name type="primary">tsf</name>
    <name type="ordered locus">PA3655</name>
</gene>
<accession>O82851</accession>
<sequence length="289" mass="30653">MAEITAAMVKELRERTGLGMMECKKALTAAGGDIEKAIDDMRAAGAIKAAKKAGNIAAEGSIAVKIAADNKAAVIIEVNSQTDFLALQDDFKGFVAESLEKAFNEKLTDAAPLVEAREEARLALVAKTGENVNIRRLTRVEGDVVGAYLHGHRIGVVVNLKGGNPELAKDIAMHVAASNPQFLSASEVSEEAIAKEKEIFLALNADKIAGKPENIVENMVKGRISKFLAEASLVEQPFVKNPEVKVGDLAKQAGAEIVSFVRYEVGEGIEKAEVDFAAEVAAQVAATKQ</sequence>
<proteinExistence type="inferred from homology"/>
<protein>
    <recommendedName>
        <fullName>Elongation factor Ts</fullName>
        <shortName>EF-Ts</shortName>
    </recommendedName>
</protein>
<reference key="1">
    <citation type="journal article" date="1999" name="J. Bacteriol.">
        <title>Molecular cloning, sequencing, purification, and characterization of Pseudomonas aeruginosa ribosome recycling factor.</title>
        <authorList>
            <person name="Ohnishi M."/>
            <person name="Janosi L."/>
            <person name="Shuda M."/>
            <person name="Matsumoto H."/>
            <person name="Hayashi T."/>
            <person name="Terawaki Y."/>
            <person name="Kaji A."/>
        </authorList>
    </citation>
    <scope>NUCLEOTIDE SEQUENCE [GENOMIC DNA]</scope>
    <source>
        <strain>ATCC 15692 / DSM 22644 / CIP 104116 / JCM 14847 / LMG 12228 / 1C / PRS 101 / PAO1</strain>
    </source>
</reference>
<reference key="2">
    <citation type="journal article" date="2000" name="Nature">
        <title>Complete genome sequence of Pseudomonas aeruginosa PAO1, an opportunistic pathogen.</title>
        <authorList>
            <person name="Stover C.K."/>
            <person name="Pham X.-Q.T."/>
            <person name="Erwin A.L."/>
            <person name="Mizoguchi S.D."/>
            <person name="Warrener P."/>
            <person name="Hickey M.J."/>
            <person name="Brinkman F.S.L."/>
            <person name="Hufnagle W.O."/>
            <person name="Kowalik D.J."/>
            <person name="Lagrou M."/>
            <person name="Garber R.L."/>
            <person name="Goltry L."/>
            <person name="Tolentino E."/>
            <person name="Westbrock-Wadman S."/>
            <person name="Yuan Y."/>
            <person name="Brody L.L."/>
            <person name="Coulter S.N."/>
            <person name="Folger K.R."/>
            <person name="Kas A."/>
            <person name="Larbig K."/>
            <person name="Lim R.M."/>
            <person name="Smith K.A."/>
            <person name="Spencer D.H."/>
            <person name="Wong G.K.-S."/>
            <person name="Wu Z."/>
            <person name="Paulsen I.T."/>
            <person name="Reizer J."/>
            <person name="Saier M.H. Jr."/>
            <person name="Hancock R.E.W."/>
            <person name="Lory S."/>
            <person name="Olson M.V."/>
        </authorList>
    </citation>
    <scope>NUCLEOTIDE SEQUENCE [LARGE SCALE GENOMIC DNA]</scope>
    <source>
        <strain>ATCC 15692 / DSM 22644 / CIP 104116 / JCM 14847 / LMG 12228 / 1C / PRS 101 / PAO1</strain>
    </source>
</reference>
<evidence type="ECO:0000250" key="1"/>
<evidence type="ECO:0000305" key="2"/>
<feature type="chain" id="PRO_0000161176" description="Elongation factor Ts">
    <location>
        <begin position="1"/>
        <end position="289"/>
    </location>
</feature>
<feature type="region of interest" description="Involved in Mg(2+) ion dislocation from EF-Tu" evidence="1">
    <location>
        <begin position="82"/>
        <end position="85"/>
    </location>
</feature>
<organism>
    <name type="scientific">Pseudomonas aeruginosa (strain ATCC 15692 / DSM 22644 / CIP 104116 / JCM 14847 / LMG 12228 / 1C / PRS 101 / PAO1)</name>
    <dbReference type="NCBI Taxonomy" id="208964"/>
    <lineage>
        <taxon>Bacteria</taxon>
        <taxon>Pseudomonadati</taxon>
        <taxon>Pseudomonadota</taxon>
        <taxon>Gammaproteobacteria</taxon>
        <taxon>Pseudomonadales</taxon>
        <taxon>Pseudomonadaceae</taxon>
        <taxon>Pseudomonas</taxon>
    </lineage>
</organism>
<comment type="function">
    <text evidence="1">Associates with the EF-Tu.GDP complex and induces the exchange of GDP to GTP. It remains bound to the aminoacyl-tRNA.EF-Tu.GTP complex up to the GTP hydrolysis stage on the ribosome (By similarity).</text>
</comment>
<comment type="subcellular location">
    <subcellularLocation>
        <location evidence="1">Cytoplasm</location>
    </subcellularLocation>
</comment>
<comment type="similarity">
    <text evidence="2">Belongs to the EF-Ts family.</text>
</comment>
<dbReference type="EMBL" id="AB010087">
    <property type="protein sequence ID" value="BAA32343.1"/>
    <property type="molecule type" value="Genomic_DNA"/>
</dbReference>
<dbReference type="EMBL" id="AE004091">
    <property type="protein sequence ID" value="AAG07043.1"/>
    <property type="molecule type" value="Genomic_DNA"/>
</dbReference>
<dbReference type="PIR" id="B83189">
    <property type="entry name" value="B83189"/>
</dbReference>
<dbReference type="RefSeq" id="NP_252345.1">
    <property type="nucleotide sequence ID" value="NC_002516.2"/>
</dbReference>
<dbReference type="RefSeq" id="WP_003092393.1">
    <property type="nucleotide sequence ID" value="NZ_QZGE01000001.1"/>
</dbReference>
<dbReference type="SMR" id="O82851"/>
<dbReference type="FunCoup" id="O82851">
    <property type="interactions" value="722"/>
</dbReference>
<dbReference type="STRING" id="208964.PA3655"/>
<dbReference type="PaxDb" id="208964-PA3655"/>
<dbReference type="DNASU" id="880592"/>
<dbReference type="GeneID" id="77219864"/>
<dbReference type="GeneID" id="880592"/>
<dbReference type="KEGG" id="pae:PA3655"/>
<dbReference type="PATRIC" id="fig|208964.12.peg.3824"/>
<dbReference type="PseudoCAP" id="PA3655"/>
<dbReference type="HOGENOM" id="CLU_047155_0_2_6"/>
<dbReference type="InParanoid" id="O82851"/>
<dbReference type="OrthoDB" id="9808348at2"/>
<dbReference type="PhylomeDB" id="O82851"/>
<dbReference type="BioCyc" id="PAER208964:G1FZ6-3725-MONOMER"/>
<dbReference type="Proteomes" id="UP000002438">
    <property type="component" value="Chromosome"/>
</dbReference>
<dbReference type="GO" id="GO:0005737">
    <property type="term" value="C:cytoplasm"/>
    <property type="evidence" value="ECO:0007669"/>
    <property type="project" value="UniProtKB-SubCell"/>
</dbReference>
<dbReference type="GO" id="GO:0003746">
    <property type="term" value="F:translation elongation factor activity"/>
    <property type="evidence" value="ECO:0000318"/>
    <property type="project" value="GO_Central"/>
</dbReference>
<dbReference type="GO" id="GO:0006414">
    <property type="term" value="P:translational elongation"/>
    <property type="evidence" value="ECO:0000318"/>
    <property type="project" value="GO_Central"/>
</dbReference>
<dbReference type="CDD" id="cd14275">
    <property type="entry name" value="UBA_EF-Ts"/>
    <property type="match status" value="1"/>
</dbReference>
<dbReference type="FunFam" id="1.10.286.20:FF:000001">
    <property type="entry name" value="Elongation factor Ts"/>
    <property type="match status" value="1"/>
</dbReference>
<dbReference type="FunFam" id="1.10.8.10:FF:000001">
    <property type="entry name" value="Elongation factor Ts"/>
    <property type="match status" value="1"/>
</dbReference>
<dbReference type="Gene3D" id="1.10.286.20">
    <property type="match status" value="1"/>
</dbReference>
<dbReference type="Gene3D" id="1.10.8.10">
    <property type="entry name" value="DNA helicase RuvA subunit, C-terminal domain"/>
    <property type="match status" value="1"/>
</dbReference>
<dbReference type="Gene3D" id="3.30.479.20">
    <property type="entry name" value="Elongation factor Ts, dimerisation domain"/>
    <property type="match status" value="2"/>
</dbReference>
<dbReference type="HAMAP" id="MF_00050">
    <property type="entry name" value="EF_Ts"/>
    <property type="match status" value="1"/>
</dbReference>
<dbReference type="InterPro" id="IPR036402">
    <property type="entry name" value="EF-Ts_dimer_sf"/>
</dbReference>
<dbReference type="InterPro" id="IPR001816">
    <property type="entry name" value="Transl_elong_EFTs/EF1B"/>
</dbReference>
<dbReference type="InterPro" id="IPR014039">
    <property type="entry name" value="Transl_elong_EFTs/EF1B_dimer"/>
</dbReference>
<dbReference type="InterPro" id="IPR018101">
    <property type="entry name" value="Transl_elong_Ts_CS"/>
</dbReference>
<dbReference type="InterPro" id="IPR009060">
    <property type="entry name" value="UBA-like_sf"/>
</dbReference>
<dbReference type="NCBIfam" id="TIGR00116">
    <property type="entry name" value="tsf"/>
    <property type="match status" value="1"/>
</dbReference>
<dbReference type="PANTHER" id="PTHR11741">
    <property type="entry name" value="ELONGATION FACTOR TS"/>
    <property type="match status" value="1"/>
</dbReference>
<dbReference type="PANTHER" id="PTHR11741:SF0">
    <property type="entry name" value="ELONGATION FACTOR TS, MITOCHONDRIAL"/>
    <property type="match status" value="1"/>
</dbReference>
<dbReference type="Pfam" id="PF00889">
    <property type="entry name" value="EF_TS"/>
    <property type="match status" value="1"/>
</dbReference>
<dbReference type="SUPFAM" id="SSF54713">
    <property type="entry name" value="Elongation factor Ts (EF-Ts), dimerisation domain"/>
    <property type="match status" value="2"/>
</dbReference>
<dbReference type="SUPFAM" id="SSF46934">
    <property type="entry name" value="UBA-like"/>
    <property type="match status" value="1"/>
</dbReference>
<dbReference type="PROSITE" id="PS01126">
    <property type="entry name" value="EF_TS_1"/>
    <property type="match status" value="1"/>
</dbReference>
<dbReference type="PROSITE" id="PS01127">
    <property type="entry name" value="EF_TS_2"/>
    <property type="match status" value="1"/>
</dbReference>
<keyword id="KW-0963">Cytoplasm</keyword>
<keyword id="KW-0251">Elongation factor</keyword>
<keyword id="KW-0648">Protein biosynthesis</keyword>
<keyword id="KW-1185">Reference proteome</keyword>
<name>EFTS_PSEAE</name>